<gene>
    <name type="primary">OPG055</name>
    <name type="ORF">C15L</name>
    <name type="ORF">F11L</name>
</gene>
<reference key="1">
    <citation type="journal article" date="1993" name="Virus Res.">
        <title>Analysis of the nucleotide sequence of a 43 kbp segment of the genome of variola virus India-1967 strain.</title>
        <authorList>
            <person name="Shchelkunov S.N."/>
            <person name="Blinov V.M."/>
            <person name="Resenchuk S.M."/>
            <person name="Totmenin A.V."/>
            <person name="Sandakhchiev L.S."/>
        </authorList>
    </citation>
    <scope>NUCLEOTIDE SEQUENCE [GENOMIC DNA]</scope>
</reference>
<reference key="2">
    <citation type="journal article" date="1993" name="FEBS Lett.">
        <title>Genes of variola and vaccinia viruses necessary to overcome the host protective mechanisms.</title>
        <authorList>
            <person name="Shchelkunov S.N."/>
            <person name="Blinov V.M."/>
            <person name="Sandakhchiev L.S."/>
        </authorList>
    </citation>
    <scope>NUCLEOTIDE SEQUENCE [GENOMIC DNA]</scope>
</reference>
<dbReference type="EMBL" id="X69198">
    <property type="protein sequence ID" value="CAA48976.1"/>
    <property type="molecule type" value="Genomic_DNA"/>
</dbReference>
<dbReference type="PIR" id="F36840">
    <property type="entry name" value="F36840"/>
</dbReference>
<dbReference type="RefSeq" id="NP_042079.1">
    <property type="nucleotide sequence ID" value="NC_001611.1"/>
</dbReference>
<dbReference type="SMR" id="P0DOP5"/>
<dbReference type="GeneID" id="1486571"/>
<dbReference type="KEGG" id="vg:1486571"/>
<dbReference type="Proteomes" id="UP000002060">
    <property type="component" value="Segment"/>
</dbReference>
<dbReference type="InterPro" id="IPR007027">
    <property type="entry name" value="Poxvirus_F11"/>
</dbReference>
<dbReference type="Pfam" id="PF04943">
    <property type="entry name" value="Pox_F11"/>
    <property type="match status" value="1"/>
</dbReference>
<dbReference type="PIRSF" id="PIRSF015981">
    <property type="entry name" value="VAC_F11L"/>
    <property type="match status" value="1"/>
</dbReference>
<accession>P0DOP5</accession>
<accession>P33870</accession>
<organismHost>
    <name type="scientific">Homo sapiens</name>
    <name type="common">Human</name>
    <dbReference type="NCBI Taxonomy" id="9606"/>
</organismHost>
<sequence>MGFCIPLRLKMLKRGSRKFSSMLARRHTPKKMNIVTDLENRLKKNSYIENTNQGNILMDSIFVSTMSVETLFGSYITDDSDDYELKDLLNVTYNIKPVIVPDIKLDAVLDRDGNFRPADCFLVKLKHRDGFTKGALYLGHSAGFTATICLKNEGVSGLYIPGTSVIRTNICQGDTIVSRSSRGVQFLLQIGGEAIFLIVSLCPTKKLVETGFVIPNISSNDNAKIAARILSEKRKDTITHIDTLIQYGQQLELAYYNSCMLTEFLHYCNLYANTIKESLLKETIQKDINITHTNITTLLNETAKVIKLVKSLVDKEDTDIVNNFITKEIKNCGGVKNRDTIVNSLSLSNLDFYL</sequence>
<organism>
    <name type="scientific">Variola virus (isolate Human/India/Ind3/1967)</name>
    <name type="common">VARV</name>
    <name type="synonym">Smallpox virus</name>
    <dbReference type="NCBI Taxonomy" id="587200"/>
    <lineage>
        <taxon>Viruses</taxon>
        <taxon>Varidnaviria</taxon>
        <taxon>Bamfordvirae</taxon>
        <taxon>Nucleocytoviricota</taxon>
        <taxon>Pokkesviricetes</taxon>
        <taxon>Chitovirales</taxon>
        <taxon>Poxviridae</taxon>
        <taxon>Chordopoxvirinae</taxon>
        <taxon>Orthopoxvirus</taxon>
        <taxon>Variola virus</taxon>
    </lineage>
</organism>
<proteinExistence type="inferred from homology"/>
<protein>
    <recommendedName>
        <fullName>Protein OPG055</fullName>
    </recommendedName>
    <alternativeName>
        <fullName>Protein F11</fullName>
    </alternativeName>
</protein>
<feature type="chain" id="PRO_0000099500" description="Protein OPG055">
    <location>
        <begin position="1"/>
        <end position="354"/>
    </location>
</feature>
<keyword id="KW-0426">Late protein</keyword>
<keyword id="KW-1185">Reference proteome</keyword>
<comment type="function">
    <text evidence="1">Stimulates increases in peripheral microtubule dynamics and may increase the motility of the infected cells, contributing to cell-to-cell spread of the virus. Seems to inhibit the signaling via the GTPase RHOA and DIAPH1/mDia.</text>
</comment>
<comment type="induction">
    <text evidence="1">Expressed in the late phase of the viral replicative cycle.</text>
</comment>
<comment type="similarity">
    <text evidence="2">Belongs to the orthopoxvirus OPG055 family.</text>
</comment>
<evidence type="ECO:0000250" key="1">
    <source>
        <dbReference type="UniProtKB" id="Q80HX7"/>
    </source>
</evidence>
<evidence type="ECO:0000305" key="2"/>
<name>PG055_VAR67</name>